<organism>
    <name type="scientific">Pectobacterium carotovorum subsp. carotovorum (strain PC1)</name>
    <dbReference type="NCBI Taxonomy" id="561230"/>
    <lineage>
        <taxon>Bacteria</taxon>
        <taxon>Pseudomonadati</taxon>
        <taxon>Pseudomonadota</taxon>
        <taxon>Gammaproteobacteria</taxon>
        <taxon>Enterobacterales</taxon>
        <taxon>Pectobacteriaceae</taxon>
        <taxon>Pectobacterium</taxon>
    </lineage>
</organism>
<accession>C6DFF0</accession>
<name>RUVC_PECCP</name>
<sequence>MTIIVGIDPGSRVTGYGIIRQQGRHLTYLGSGCIRTVVDDMPTRLKLIYAGVSEIITQFRPDCMAIEQVFMAKNPDSALKLGQARGVAIVAGVNQDLPVFEYAARLVKQTVVGTGAADKKQVQHMVRSLLKLSASPQADAADALAIAITHCHFNQSLLRTSAAKVNPLAGRLR</sequence>
<evidence type="ECO:0000255" key="1">
    <source>
        <dbReference type="HAMAP-Rule" id="MF_00034"/>
    </source>
</evidence>
<reference key="1">
    <citation type="submission" date="2009-07" db="EMBL/GenBank/DDBJ databases">
        <title>Complete sequence of Pectobacterium carotovorum subsp. carotovorum PC1.</title>
        <authorList>
            <consortium name="US DOE Joint Genome Institute"/>
            <person name="Lucas S."/>
            <person name="Copeland A."/>
            <person name="Lapidus A."/>
            <person name="Glavina del Rio T."/>
            <person name="Tice H."/>
            <person name="Bruce D."/>
            <person name="Goodwin L."/>
            <person name="Pitluck S."/>
            <person name="Munk A.C."/>
            <person name="Brettin T."/>
            <person name="Detter J.C."/>
            <person name="Han C."/>
            <person name="Tapia R."/>
            <person name="Larimer F."/>
            <person name="Land M."/>
            <person name="Hauser L."/>
            <person name="Kyrpides N."/>
            <person name="Mikhailova N."/>
            <person name="Balakrishnan V."/>
            <person name="Glasner J."/>
            <person name="Perna N.T."/>
        </authorList>
    </citation>
    <scope>NUCLEOTIDE SEQUENCE [LARGE SCALE GENOMIC DNA]</scope>
    <source>
        <strain>PC1</strain>
    </source>
</reference>
<protein>
    <recommendedName>
        <fullName evidence="1">Crossover junction endodeoxyribonuclease RuvC</fullName>
        <ecNumber evidence="1">3.1.21.10</ecNumber>
    </recommendedName>
    <alternativeName>
        <fullName evidence="1">Holliday junction nuclease RuvC</fullName>
    </alternativeName>
    <alternativeName>
        <fullName evidence="1">Holliday junction resolvase RuvC</fullName>
    </alternativeName>
</protein>
<proteinExistence type="inferred from homology"/>
<dbReference type="EC" id="3.1.21.10" evidence="1"/>
<dbReference type="EMBL" id="CP001657">
    <property type="protein sequence ID" value="ACT12859.1"/>
    <property type="molecule type" value="Genomic_DNA"/>
</dbReference>
<dbReference type="RefSeq" id="WP_015840063.1">
    <property type="nucleotide sequence ID" value="NC_012917.1"/>
</dbReference>
<dbReference type="SMR" id="C6DFF0"/>
<dbReference type="STRING" id="561230.PC1_1818"/>
<dbReference type="GeneID" id="67793820"/>
<dbReference type="KEGG" id="pct:PC1_1818"/>
<dbReference type="eggNOG" id="COG0817">
    <property type="taxonomic scope" value="Bacteria"/>
</dbReference>
<dbReference type="HOGENOM" id="CLU_091257_2_1_6"/>
<dbReference type="OrthoDB" id="9805499at2"/>
<dbReference type="Proteomes" id="UP000002736">
    <property type="component" value="Chromosome"/>
</dbReference>
<dbReference type="GO" id="GO:0005737">
    <property type="term" value="C:cytoplasm"/>
    <property type="evidence" value="ECO:0007669"/>
    <property type="project" value="UniProtKB-SubCell"/>
</dbReference>
<dbReference type="GO" id="GO:0048476">
    <property type="term" value="C:Holliday junction resolvase complex"/>
    <property type="evidence" value="ECO:0007669"/>
    <property type="project" value="UniProtKB-UniRule"/>
</dbReference>
<dbReference type="GO" id="GO:0008821">
    <property type="term" value="F:crossover junction DNA endonuclease activity"/>
    <property type="evidence" value="ECO:0007669"/>
    <property type="project" value="UniProtKB-UniRule"/>
</dbReference>
<dbReference type="GO" id="GO:0003677">
    <property type="term" value="F:DNA binding"/>
    <property type="evidence" value="ECO:0007669"/>
    <property type="project" value="UniProtKB-KW"/>
</dbReference>
<dbReference type="GO" id="GO:0000287">
    <property type="term" value="F:magnesium ion binding"/>
    <property type="evidence" value="ECO:0007669"/>
    <property type="project" value="UniProtKB-UniRule"/>
</dbReference>
<dbReference type="GO" id="GO:0006310">
    <property type="term" value="P:DNA recombination"/>
    <property type="evidence" value="ECO:0007669"/>
    <property type="project" value="UniProtKB-UniRule"/>
</dbReference>
<dbReference type="GO" id="GO:0006281">
    <property type="term" value="P:DNA repair"/>
    <property type="evidence" value="ECO:0007669"/>
    <property type="project" value="UniProtKB-UniRule"/>
</dbReference>
<dbReference type="CDD" id="cd16962">
    <property type="entry name" value="RuvC"/>
    <property type="match status" value="1"/>
</dbReference>
<dbReference type="FunFam" id="3.30.420.10:FF:000002">
    <property type="entry name" value="Crossover junction endodeoxyribonuclease RuvC"/>
    <property type="match status" value="1"/>
</dbReference>
<dbReference type="Gene3D" id="3.30.420.10">
    <property type="entry name" value="Ribonuclease H-like superfamily/Ribonuclease H"/>
    <property type="match status" value="1"/>
</dbReference>
<dbReference type="HAMAP" id="MF_00034">
    <property type="entry name" value="RuvC"/>
    <property type="match status" value="1"/>
</dbReference>
<dbReference type="InterPro" id="IPR012337">
    <property type="entry name" value="RNaseH-like_sf"/>
</dbReference>
<dbReference type="InterPro" id="IPR036397">
    <property type="entry name" value="RNaseH_sf"/>
</dbReference>
<dbReference type="InterPro" id="IPR020563">
    <property type="entry name" value="X-over_junc_endoDNase_Mg_BS"/>
</dbReference>
<dbReference type="InterPro" id="IPR002176">
    <property type="entry name" value="X-over_junc_endoDNase_RuvC"/>
</dbReference>
<dbReference type="NCBIfam" id="NF000711">
    <property type="entry name" value="PRK00039.2-1"/>
    <property type="match status" value="1"/>
</dbReference>
<dbReference type="NCBIfam" id="TIGR00228">
    <property type="entry name" value="ruvC"/>
    <property type="match status" value="1"/>
</dbReference>
<dbReference type="PANTHER" id="PTHR30194">
    <property type="entry name" value="CROSSOVER JUNCTION ENDODEOXYRIBONUCLEASE RUVC"/>
    <property type="match status" value="1"/>
</dbReference>
<dbReference type="PANTHER" id="PTHR30194:SF3">
    <property type="entry name" value="CROSSOVER JUNCTION ENDODEOXYRIBONUCLEASE RUVC"/>
    <property type="match status" value="1"/>
</dbReference>
<dbReference type="Pfam" id="PF02075">
    <property type="entry name" value="RuvC"/>
    <property type="match status" value="1"/>
</dbReference>
<dbReference type="PRINTS" id="PR00696">
    <property type="entry name" value="RSOLVASERUVC"/>
</dbReference>
<dbReference type="SUPFAM" id="SSF53098">
    <property type="entry name" value="Ribonuclease H-like"/>
    <property type="match status" value="1"/>
</dbReference>
<dbReference type="PROSITE" id="PS01321">
    <property type="entry name" value="RUVC"/>
    <property type="match status" value="1"/>
</dbReference>
<comment type="function">
    <text evidence="1">The RuvA-RuvB-RuvC complex processes Holliday junction (HJ) DNA during genetic recombination and DNA repair. Endonuclease that resolves HJ intermediates. Cleaves cruciform DNA by making single-stranded nicks across the HJ at symmetrical positions within the homologous arms, yielding a 5'-phosphate and a 3'-hydroxyl group; requires a central core of homology in the junction. The consensus cleavage sequence is 5'-(A/T)TT(C/G)-3'. Cleavage occurs on the 3'-side of the TT dinucleotide at the point of strand exchange. HJ branch migration catalyzed by RuvA-RuvB allows RuvC to scan DNA until it finds its consensus sequence, where it cleaves and resolves the cruciform DNA.</text>
</comment>
<comment type="catalytic activity">
    <reaction evidence="1">
        <text>Endonucleolytic cleavage at a junction such as a reciprocal single-stranded crossover between two homologous DNA duplexes (Holliday junction).</text>
        <dbReference type="EC" id="3.1.21.10"/>
    </reaction>
</comment>
<comment type="cofactor">
    <cofactor evidence="1">
        <name>Mg(2+)</name>
        <dbReference type="ChEBI" id="CHEBI:18420"/>
    </cofactor>
    <text evidence="1">Binds 2 Mg(2+) ion per subunit.</text>
</comment>
<comment type="subunit">
    <text evidence="1">Homodimer which binds Holliday junction (HJ) DNA. The HJ becomes 2-fold symmetrical on binding to RuvC with unstacked arms; it has a different conformation from HJ DNA in complex with RuvA. In the full resolvosome a probable DNA-RuvA(4)-RuvB(12)-RuvC(2) complex forms which resolves the HJ.</text>
</comment>
<comment type="subcellular location">
    <subcellularLocation>
        <location evidence="1">Cytoplasm</location>
    </subcellularLocation>
</comment>
<comment type="similarity">
    <text evidence="1">Belongs to the RuvC family.</text>
</comment>
<gene>
    <name evidence="1" type="primary">ruvC</name>
    <name type="ordered locus">PC1_1818</name>
</gene>
<feature type="chain" id="PRO_1000202038" description="Crossover junction endodeoxyribonuclease RuvC">
    <location>
        <begin position="1"/>
        <end position="173"/>
    </location>
</feature>
<feature type="active site" evidence="1">
    <location>
        <position position="8"/>
    </location>
</feature>
<feature type="active site" evidence="1">
    <location>
        <position position="67"/>
    </location>
</feature>
<feature type="active site" evidence="1">
    <location>
        <position position="139"/>
    </location>
</feature>
<feature type="binding site" evidence="1">
    <location>
        <position position="8"/>
    </location>
    <ligand>
        <name>Mg(2+)</name>
        <dbReference type="ChEBI" id="CHEBI:18420"/>
        <label>1</label>
    </ligand>
</feature>
<feature type="binding site" evidence="1">
    <location>
        <position position="67"/>
    </location>
    <ligand>
        <name>Mg(2+)</name>
        <dbReference type="ChEBI" id="CHEBI:18420"/>
        <label>2</label>
    </ligand>
</feature>
<feature type="binding site" evidence="1">
    <location>
        <position position="139"/>
    </location>
    <ligand>
        <name>Mg(2+)</name>
        <dbReference type="ChEBI" id="CHEBI:18420"/>
        <label>1</label>
    </ligand>
</feature>
<keyword id="KW-0963">Cytoplasm</keyword>
<keyword id="KW-0227">DNA damage</keyword>
<keyword id="KW-0233">DNA recombination</keyword>
<keyword id="KW-0234">DNA repair</keyword>
<keyword id="KW-0238">DNA-binding</keyword>
<keyword id="KW-0255">Endonuclease</keyword>
<keyword id="KW-0378">Hydrolase</keyword>
<keyword id="KW-0460">Magnesium</keyword>
<keyword id="KW-0479">Metal-binding</keyword>
<keyword id="KW-0540">Nuclease</keyword>